<gene>
    <name type="primary">dut</name>
    <name type="ORF">DDB_G0293374</name>
</gene>
<proteinExistence type="evidence at protein level"/>
<accession>Q54BW5</accession>
<name>DUT_DICDI</name>
<dbReference type="EC" id="3.6.1.23" evidence="2"/>
<dbReference type="EMBL" id="AAFI02000204">
    <property type="protein sequence ID" value="EAL60754.1"/>
    <property type="molecule type" value="Genomic_DNA"/>
</dbReference>
<dbReference type="RefSeq" id="XP_629169.1">
    <property type="nucleotide sequence ID" value="XM_629167.1"/>
</dbReference>
<dbReference type="PDB" id="5F9K">
    <property type="method" value="X-ray"/>
    <property type="resolution" value="2.18 A"/>
    <property type="chains" value="A/B/C=38-179"/>
</dbReference>
<dbReference type="PDBsum" id="5F9K"/>
<dbReference type="SMR" id="Q54BW5"/>
<dbReference type="FunCoup" id="Q54BW5">
    <property type="interactions" value="816"/>
</dbReference>
<dbReference type="STRING" id="44689.Q54BW5"/>
<dbReference type="PaxDb" id="44689-DDB0230111"/>
<dbReference type="EnsemblProtists" id="EAL60754">
    <property type="protein sequence ID" value="EAL60754"/>
    <property type="gene ID" value="DDB_G0293374"/>
</dbReference>
<dbReference type="GeneID" id="8629190"/>
<dbReference type="KEGG" id="ddi:DDB_G0293374"/>
<dbReference type="dictyBase" id="DDB_G0293374">
    <property type="gene designation" value="dut"/>
</dbReference>
<dbReference type="VEuPathDB" id="AmoebaDB:DDB_G0293374"/>
<dbReference type="eggNOG" id="KOG3370">
    <property type="taxonomic scope" value="Eukaryota"/>
</dbReference>
<dbReference type="HOGENOM" id="CLU_068508_2_1_1"/>
<dbReference type="InParanoid" id="Q54BW5"/>
<dbReference type="OMA" id="RSGMGHK"/>
<dbReference type="PhylomeDB" id="Q54BW5"/>
<dbReference type="Reactome" id="R-DDI-499943">
    <property type="pathway name" value="Interconversion of nucleotide di- and triphosphates"/>
</dbReference>
<dbReference type="SABIO-RK" id="Q54BW5"/>
<dbReference type="UniPathway" id="UPA00610">
    <property type="reaction ID" value="UER00666"/>
</dbReference>
<dbReference type="PRO" id="PR:Q54BW5"/>
<dbReference type="Proteomes" id="UP000002195">
    <property type="component" value="Chromosome 6"/>
</dbReference>
<dbReference type="GO" id="GO:0005739">
    <property type="term" value="C:mitochondrion"/>
    <property type="evidence" value="ECO:0000314"/>
    <property type="project" value="dictyBase"/>
</dbReference>
<dbReference type="GO" id="GO:0004170">
    <property type="term" value="F:dUTP diphosphatase activity"/>
    <property type="evidence" value="ECO:0000314"/>
    <property type="project" value="dictyBase"/>
</dbReference>
<dbReference type="GO" id="GO:0000287">
    <property type="term" value="F:magnesium ion binding"/>
    <property type="evidence" value="ECO:0000314"/>
    <property type="project" value="dictyBase"/>
</dbReference>
<dbReference type="GO" id="GO:0006226">
    <property type="term" value="P:dUMP biosynthetic process"/>
    <property type="evidence" value="ECO:0000318"/>
    <property type="project" value="GO_Central"/>
</dbReference>
<dbReference type="GO" id="GO:0046081">
    <property type="term" value="P:dUTP catabolic process"/>
    <property type="evidence" value="ECO:0000318"/>
    <property type="project" value="GO_Central"/>
</dbReference>
<dbReference type="GO" id="GO:0009213">
    <property type="term" value="P:pyrimidine deoxyribonucleoside triphosphate catabolic process"/>
    <property type="evidence" value="ECO:0000250"/>
    <property type="project" value="dictyBase"/>
</dbReference>
<dbReference type="CDD" id="cd07557">
    <property type="entry name" value="trimeric_dUTPase"/>
    <property type="match status" value="1"/>
</dbReference>
<dbReference type="DisProt" id="DP02689"/>
<dbReference type="FunFam" id="2.70.40.10:FF:000004">
    <property type="entry name" value="Deoxyuridine triphosphatase"/>
    <property type="match status" value="1"/>
</dbReference>
<dbReference type="Gene3D" id="2.70.40.10">
    <property type="match status" value="1"/>
</dbReference>
<dbReference type="InterPro" id="IPR008181">
    <property type="entry name" value="dUTPase"/>
</dbReference>
<dbReference type="InterPro" id="IPR029054">
    <property type="entry name" value="dUTPase-like"/>
</dbReference>
<dbReference type="InterPro" id="IPR036157">
    <property type="entry name" value="dUTPase-like_sf"/>
</dbReference>
<dbReference type="InterPro" id="IPR033704">
    <property type="entry name" value="dUTPase_trimeric"/>
</dbReference>
<dbReference type="NCBIfam" id="TIGR00576">
    <property type="entry name" value="dut"/>
    <property type="match status" value="1"/>
</dbReference>
<dbReference type="NCBIfam" id="NF001862">
    <property type="entry name" value="PRK00601.1"/>
    <property type="match status" value="1"/>
</dbReference>
<dbReference type="PANTHER" id="PTHR11241">
    <property type="entry name" value="DEOXYURIDINE 5'-TRIPHOSPHATE NUCLEOTIDOHYDROLASE"/>
    <property type="match status" value="1"/>
</dbReference>
<dbReference type="PANTHER" id="PTHR11241:SF0">
    <property type="entry name" value="DEOXYURIDINE 5'-TRIPHOSPHATE NUCLEOTIDOHYDROLASE"/>
    <property type="match status" value="1"/>
</dbReference>
<dbReference type="Pfam" id="PF00692">
    <property type="entry name" value="dUTPase"/>
    <property type="match status" value="1"/>
</dbReference>
<dbReference type="SUPFAM" id="SSF51283">
    <property type="entry name" value="dUTPase-like"/>
    <property type="match status" value="1"/>
</dbReference>
<feature type="transit peptide" description="Mitochondrion" evidence="2">
    <location>
        <begin position="1"/>
        <end position="41"/>
    </location>
</feature>
<feature type="chain" id="PRO_0000327582" description="Deoxyuridine 5'-triphosphate nucleotidohydrolase, mitochondrial">
    <location>
        <begin position="42"/>
        <end position="179"/>
    </location>
</feature>
<feature type="binding site" evidence="5 6">
    <location>
        <begin position="97"/>
        <end position="99"/>
    </location>
    <ligand>
        <name>dUTP</name>
        <dbReference type="ChEBI" id="CHEBI:61555"/>
    </ligand>
</feature>
<feature type="binding site" evidence="5 6">
    <location>
        <begin position="111"/>
        <end position="114"/>
    </location>
    <ligand>
        <name>dUTP</name>
        <dbReference type="ChEBI" id="CHEBI:61555"/>
    </ligand>
</feature>
<feature type="binding site" evidence="5 6">
    <location>
        <position position="122"/>
    </location>
    <ligand>
        <name>dUTP</name>
        <dbReference type="ChEBI" id="CHEBI:61555"/>
    </ligand>
</feature>
<feature type="binding site" evidence="1">
    <location>
        <position position="165"/>
    </location>
    <ligand>
        <name>dUTP</name>
        <dbReference type="ChEBI" id="CHEBI:61555"/>
    </ligand>
</feature>
<feature type="binding site" evidence="1">
    <location>
        <begin position="170"/>
        <end position="171"/>
    </location>
    <ligand>
        <name>dUTP</name>
        <dbReference type="ChEBI" id="CHEBI:61555"/>
    </ligand>
</feature>
<feature type="strand" evidence="7">
    <location>
        <begin position="38"/>
        <end position="44"/>
    </location>
</feature>
<feature type="strand" evidence="7">
    <location>
        <begin position="51"/>
        <end position="54"/>
    </location>
</feature>
<feature type="strand" evidence="7">
    <location>
        <begin position="58"/>
        <end position="63"/>
    </location>
</feature>
<feature type="strand" evidence="7">
    <location>
        <begin position="68"/>
        <end position="70"/>
    </location>
</feature>
<feature type="strand" evidence="7">
    <location>
        <begin position="74"/>
        <end position="79"/>
    </location>
</feature>
<feature type="strand" evidence="7">
    <location>
        <begin position="82"/>
        <end position="84"/>
    </location>
</feature>
<feature type="strand" evidence="7">
    <location>
        <begin position="90"/>
        <end position="95"/>
    </location>
</feature>
<feature type="helix" evidence="7">
    <location>
        <begin position="98"/>
        <end position="104"/>
    </location>
</feature>
<feature type="strand" evidence="7">
    <location>
        <begin position="106"/>
        <end position="110"/>
    </location>
</feature>
<feature type="strand" evidence="7">
    <location>
        <begin position="122"/>
        <end position="127"/>
    </location>
</feature>
<feature type="strand" evidence="7">
    <location>
        <begin position="129"/>
        <end position="131"/>
    </location>
</feature>
<feature type="strand" evidence="7">
    <location>
        <begin position="133"/>
        <end position="135"/>
    </location>
</feature>
<feature type="strand" evidence="7">
    <location>
        <begin position="140"/>
        <end position="150"/>
    </location>
</feature>
<keyword id="KW-0002">3D-structure</keyword>
<keyword id="KW-0378">Hydrolase</keyword>
<keyword id="KW-0460">Magnesium</keyword>
<keyword id="KW-0479">Metal-binding</keyword>
<keyword id="KW-0496">Mitochondrion</keyword>
<keyword id="KW-0546">Nucleotide metabolism</keyword>
<keyword id="KW-1185">Reference proteome</keyword>
<keyword id="KW-0809">Transit peptide</keyword>
<organism>
    <name type="scientific">Dictyostelium discoideum</name>
    <name type="common">Social amoeba</name>
    <dbReference type="NCBI Taxonomy" id="44689"/>
    <lineage>
        <taxon>Eukaryota</taxon>
        <taxon>Amoebozoa</taxon>
        <taxon>Evosea</taxon>
        <taxon>Eumycetozoa</taxon>
        <taxon>Dictyostelia</taxon>
        <taxon>Dictyosteliales</taxon>
        <taxon>Dictyosteliaceae</taxon>
        <taxon>Dictyostelium</taxon>
    </lineage>
</organism>
<comment type="function">
    <text evidence="2">This enzyme is involved in nucleotide metabolism: it produces dUMP, the immediate precursor of thymidine nucleotides and it decreases the intracellular concentration of dUTP so that uracil cannot be incorporated into DNA.</text>
</comment>
<comment type="catalytic activity">
    <reaction evidence="2">
        <text>dUTP + H2O = dUMP + diphosphate + H(+)</text>
        <dbReference type="Rhea" id="RHEA:10248"/>
        <dbReference type="ChEBI" id="CHEBI:15377"/>
        <dbReference type="ChEBI" id="CHEBI:15378"/>
        <dbReference type="ChEBI" id="CHEBI:33019"/>
        <dbReference type="ChEBI" id="CHEBI:61555"/>
        <dbReference type="ChEBI" id="CHEBI:246422"/>
        <dbReference type="EC" id="3.6.1.23"/>
    </reaction>
</comment>
<comment type="cofactor">
    <cofactor evidence="2">
        <name>Mg(2+)</name>
        <dbReference type="ChEBI" id="CHEBI:18420"/>
    </cofactor>
</comment>
<comment type="biophysicochemical properties">
    <kinetics>
        <KM evidence="2">0.5 uM for dUTP</KM>
        <text evidence="2">kcat is 9.3 sec(-1) with dUTP as substrate.</text>
    </kinetics>
    <phDependence>
        <text evidence="2">Optimum pH is 8.</text>
    </phDependence>
    <temperatureDependence>
        <text evidence="2">Optimum temperature is 60 degrees Celsius.</text>
    </temperatureDependence>
</comment>
<comment type="pathway">
    <text evidence="2">Pyrimidine metabolism; dUMP biosynthesis; dUMP from dCTP (dUTP route): step 2/2.</text>
</comment>
<comment type="subunit">
    <text evidence="2">Homotrimer.</text>
</comment>
<comment type="subcellular location">
    <subcellularLocation>
        <location evidence="2">Mitochondrion</location>
    </subcellularLocation>
</comment>
<comment type="similarity">
    <text evidence="4">Belongs to the dUTPase family.</text>
</comment>
<reference key="1">
    <citation type="journal article" date="2005" name="Nature">
        <title>The genome of the social amoeba Dictyostelium discoideum.</title>
        <authorList>
            <person name="Eichinger L."/>
            <person name="Pachebat J.A."/>
            <person name="Gloeckner G."/>
            <person name="Rajandream M.A."/>
            <person name="Sucgang R."/>
            <person name="Berriman M."/>
            <person name="Song J."/>
            <person name="Olsen R."/>
            <person name="Szafranski K."/>
            <person name="Xu Q."/>
            <person name="Tunggal B."/>
            <person name="Kummerfeld S."/>
            <person name="Madera M."/>
            <person name="Konfortov B.A."/>
            <person name="Rivero F."/>
            <person name="Bankier A.T."/>
            <person name="Lehmann R."/>
            <person name="Hamlin N."/>
            <person name="Davies R."/>
            <person name="Gaudet P."/>
            <person name="Fey P."/>
            <person name="Pilcher K."/>
            <person name="Chen G."/>
            <person name="Saunders D."/>
            <person name="Sodergren E.J."/>
            <person name="Davis P."/>
            <person name="Kerhornou A."/>
            <person name="Nie X."/>
            <person name="Hall N."/>
            <person name="Anjard C."/>
            <person name="Hemphill L."/>
            <person name="Bason N."/>
            <person name="Farbrother P."/>
            <person name="Desany B."/>
            <person name="Just E."/>
            <person name="Morio T."/>
            <person name="Rost R."/>
            <person name="Churcher C.M."/>
            <person name="Cooper J."/>
            <person name="Haydock S."/>
            <person name="van Driessche N."/>
            <person name="Cronin A."/>
            <person name="Goodhead I."/>
            <person name="Muzny D.M."/>
            <person name="Mourier T."/>
            <person name="Pain A."/>
            <person name="Lu M."/>
            <person name="Harper D."/>
            <person name="Lindsay R."/>
            <person name="Hauser H."/>
            <person name="James K.D."/>
            <person name="Quiles M."/>
            <person name="Madan Babu M."/>
            <person name="Saito T."/>
            <person name="Buchrieser C."/>
            <person name="Wardroper A."/>
            <person name="Felder M."/>
            <person name="Thangavelu M."/>
            <person name="Johnson D."/>
            <person name="Knights A."/>
            <person name="Loulseged H."/>
            <person name="Mungall K.L."/>
            <person name="Oliver K."/>
            <person name="Price C."/>
            <person name="Quail M.A."/>
            <person name="Urushihara H."/>
            <person name="Hernandez J."/>
            <person name="Rabbinowitsch E."/>
            <person name="Steffen D."/>
            <person name="Sanders M."/>
            <person name="Ma J."/>
            <person name="Kohara Y."/>
            <person name="Sharp S."/>
            <person name="Simmonds M.N."/>
            <person name="Spiegler S."/>
            <person name="Tivey A."/>
            <person name="Sugano S."/>
            <person name="White B."/>
            <person name="Walker D."/>
            <person name="Woodward J.R."/>
            <person name="Winckler T."/>
            <person name="Tanaka Y."/>
            <person name="Shaulsky G."/>
            <person name="Schleicher M."/>
            <person name="Weinstock G.M."/>
            <person name="Rosenthal A."/>
            <person name="Cox E.C."/>
            <person name="Chisholm R.L."/>
            <person name="Gibbs R.A."/>
            <person name="Loomis W.F."/>
            <person name="Platzer M."/>
            <person name="Kay R.R."/>
            <person name="Williams J.G."/>
            <person name="Dear P.H."/>
            <person name="Noegel A.A."/>
            <person name="Barrell B.G."/>
            <person name="Kuspa A."/>
        </authorList>
    </citation>
    <scope>NUCLEOTIDE SEQUENCE [LARGE SCALE GENOMIC DNA]</scope>
    <source>
        <strain>AX4</strain>
    </source>
</reference>
<reference evidence="6" key="2">
    <citation type="journal article" date="2020" name="BMC Res. Notes">
        <title>Mitochondrial localization of Dictyostelium discoideum dUTPase mediated by its N-terminus.</title>
        <authorList>
            <person name="Chia C.P."/>
            <person name="Inoguchi N."/>
            <person name="Varon K.C."/>
            <person name="Bartholomai B.M."/>
            <person name="Moriyama H."/>
        </authorList>
    </citation>
    <scope>X-RAY CRYSTALLOGRAPHY (2.18 ANGSTROMS) OF 38-179 IN COMPLEX WITH SUBSTRATE ANALOG DUP</scope>
    <scope>FUNCTION</scope>
    <scope>CATALYTIC ACTIVITY</scope>
    <scope>COFACTOR</scope>
    <scope>BIOPHYSICOCHEMICAL PROPERTIES</scope>
    <scope>PATHWAY</scope>
    <scope>SUBUNIT</scope>
    <scope>SUBCELLULAR LOCATION</scope>
    <scope>CLEAVAGE OF TRANSIT PEPTIDE AFTER GLY-41</scope>
</reference>
<sequence length="179" mass="19532">MPIEQKYFSLFSNLFKRLTTNNNNNNYLKMAPPNFETFKVKKLSDKAIIPQRGSKGAAGYDLSSAHELVVPAHGKALAMTDLQIAIPDGTYGRIAPRSGLAWKNFIDCGAGVIDSDYRGNVGVVLFNHSDVDFKVAVGDRVAQLIFERIVTPEPLEVDEIDETQRGAGGFGSTGVKVQN</sequence>
<evidence type="ECO:0000250" key="1">
    <source>
        <dbReference type="UniProtKB" id="P33316"/>
    </source>
</evidence>
<evidence type="ECO:0000269" key="2">
    <source>
    </source>
</evidence>
<evidence type="ECO:0000303" key="3">
    <source>
    </source>
</evidence>
<evidence type="ECO:0000305" key="4"/>
<evidence type="ECO:0000305" key="5">
    <source>
    </source>
</evidence>
<evidence type="ECO:0007744" key="6">
    <source>
        <dbReference type="PDB" id="5F9K"/>
    </source>
</evidence>
<evidence type="ECO:0007829" key="7">
    <source>
        <dbReference type="PDB" id="5F9K"/>
    </source>
</evidence>
<protein>
    <recommendedName>
        <fullName evidence="3">Deoxyuridine 5'-triphosphate nucleotidohydrolase, mitochondrial</fullName>
        <shortName evidence="3">dUTPase</shortName>
        <ecNumber evidence="2">3.6.1.23</ecNumber>
    </recommendedName>
    <alternativeName>
        <fullName evidence="4">dUTP pyrophosphatase</fullName>
    </alternativeName>
</protein>